<comment type="function">
    <text evidence="1">Catalyzes the phosphorylation of pantothenate (Pan), the first step in CoA biosynthesis.</text>
</comment>
<comment type="catalytic activity">
    <reaction evidence="1">
        <text>(R)-pantothenate + ATP = (R)-4'-phosphopantothenate + ADP + H(+)</text>
        <dbReference type="Rhea" id="RHEA:16373"/>
        <dbReference type="ChEBI" id="CHEBI:10986"/>
        <dbReference type="ChEBI" id="CHEBI:15378"/>
        <dbReference type="ChEBI" id="CHEBI:29032"/>
        <dbReference type="ChEBI" id="CHEBI:30616"/>
        <dbReference type="ChEBI" id="CHEBI:456216"/>
        <dbReference type="EC" id="2.7.1.33"/>
    </reaction>
</comment>
<comment type="cofactor">
    <cofactor evidence="1">
        <name>NH4(+)</name>
        <dbReference type="ChEBI" id="CHEBI:28938"/>
    </cofactor>
    <cofactor evidence="1">
        <name>K(+)</name>
        <dbReference type="ChEBI" id="CHEBI:29103"/>
    </cofactor>
    <text evidence="1">A monovalent cation. Ammonium or potassium.</text>
</comment>
<comment type="pathway">
    <text evidence="1">Cofactor biosynthesis; coenzyme A biosynthesis; CoA from (R)-pantothenate: step 1/5.</text>
</comment>
<comment type="subunit">
    <text evidence="1">Homodimer.</text>
</comment>
<comment type="subcellular location">
    <subcellularLocation>
        <location evidence="1">Cytoplasm</location>
    </subcellularLocation>
</comment>
<comment type="similarity">
    <text evidence="1">Belongs to the type III pantothenate kinase family.</text>
</comment>
<evidence type="ECO:0000255" key="1">
    <source>
        <dbReference type="HAMAP-Rule" id="MF_01274"/>
    </source>
</evidence>
<dbReference type="EC" id="2.7.1.33" evidence="1"/>
<dbReference type="EMBL" id="CP000094">
    <property type="protein sequence ID" value="ABA76832.1"/>
    <property type="molecule type" value="Genomic_DNA"/>
</dbReference>
<dbReference type="RefSeq" id="WP_011336177.1">
    <property type="nucleotide sequence ID" value="NC_007492.2"/>
</dbReference>
<dbReference type="SMR" id="Q3K5X2"/>
<dbReference type="KEGG" id="pfo:Pfl01_5095"/>
<dbReference type="eggNOG" id="COG1521">
    <property type="taxonomic scope" value="Bacteria"/>
</dbReference>
<dbReference type="HOGENOM" id="CLU_066627_0_1_6"/>
<dbReference type="UniPathway" id="UPA00241">
    <property type="reaction ID" value="UER00352"/>
</dbReference>
<dbReference type="Proteomes" id="UP000002704">
    <property type="component" value="Chromosome"/>
</dbReference>
<dbReference type="GO" id="GO:0005737">
    <property type="term" value="C:cytoplasm"/>
    <property type="evidence" value="ECO:0007669"/>
    <property type="project" value="UniProtKB-SubCell"/>
</dbReference>
<dbReference type="GO" id="GO:0005524">
    <property type="term" value="F:ATP binding"/>
    <property type="evidence" value="ECO:0007669"/>
    <property type="project" value="UniProtKB-UniRule"/>
</dbReference>
<dbReference type="GO" id="GO:0046872">
    <property type="term" value="F:metal ion binding"/>
    <property type="evidence" value="ECO:0007669"/>
    <property type="project" value="UniProtKB-KW"/>
</dbReference>
<dbReference type="GO" id="GO:0004594">
    <property type="term" value="F:pantothenate kinase activity"/>
    <property type="evidence" value="ECO:0007669"/>
    <property type="project" value="UniProtKB-UniRule"/>
</dbReference>
<dbReference type="GO" id="GO:0015937">
    <property type="term" value="P:coenzyme A biosynthetic process"/>
    <property type="evidence" value="ECO:0007669"/>
    <property type="project" value="UniProtKB-UniRule"/>
</dbReference>
<dbReference type="CDD" id="cd24015">
    <property type="entry name" value="ASKHA_NBD_PanK-III"/>
    <property type="match status" value="1"/>
</dbReference>
<dbReference type="Gene3D" id="3.30.420.40">
    <property type="match status" value="2"/>
</dbReference>
<dbReference type="HAMAP" id="MF_01274">
    <property type="entry name" value="Pantothen_kinase_3"/>
    <property type="match status" value="1"/>
</dbReference>
<dbReference type="InterPro" id="IPR043129">
    <property type="entry name" value="ATPase_NBD"/>
</dbReference>
<dbReference type="InterPro" id="IPR004619">
    <property type="entry name" value="Type_III_PanK"/>
</dbReference>
<dbReference type="NCBIfam" id="TIGR00671">
    <property type="entry name" value="baf"/>
    <property type="match status" value="1"/>
</dbReference>
<dbReference type="NCBIfam" id="NF009857">
    <property type="entry name" value="PRK13322.1-2"/>
    <property type="match status" value="1"/>
</dbReference>
<dbReference type="NCBIfam" id="NF009859">
    <property type="entry name" value="PRK13322.1-4"/>
    <property type="match status" value="1"/>
</dbReference>
<dbReference type="PANTHER" id="PTHR34265">
    <property type="entry name" value="TYPE III PANTOTHENATE KINASE"/>
    <property type="match status" value="1"/>
</dbReference>
<dbReference type="PANTHER" id="PTHR34265:SF1">
    <property type="entry name" value="TYPE III PANTOTHENATE KINASE"/>
    <property type="match status" value="1"/>
</dbReference>
<dbReference type="Pfam" id="PF03309">
    <property type="entry name" value="Pan_kinase"/>
    <property type="match status" value="1"/>
</dbReference>
<dbReference type="SUPFAM" id="SSF53067">
    <property type="entry name" value="Actin-like ATPase domain"/>
    <property type="match status" value="2"/>
</dbReference>
<name>COAX_PSEPF</name>
<reference key="1">
    <citation type="journal article" date="2009" name="Genome Biol.">
        <title>Genomic and genetic analyses of diversity and plant interactions of Pseudomonas fluorescens.</title>
        <authorList>
            <person name="Silby M.W."/>
            <person name="Cerdeno-Tarraga A.M."/>
            <person name="Vernikos G.S."/>
            <person name="Giddens S.R."/>
            <person name="Jackson R.W."/>
            <person name="Preston G.M."/>
            <person name="Zhang X.-X."/>
            <person name="Moon C.D."/>
            <person name="Gehrig S.M."/>
            <person name="Godfrey S.A.C."/>
            <person name="Knight C.G."/>
            <person name="Malone J.G."/>
            <person name="Robinson Z."/>
            <person name="Spiers A.J."/>
            <person name="Harris S."/>
            <person name="Challis G.L."/>
            <person name="Yaxley A.M."/>
            <person name="Harris D."/>
            <person name="Seeger K."/>
            <person name="Murphy L."/>
            <person name="Rutter S."/>
            <person name="Squares R."/>
            <person name="Quail M.A."/>
            <person name="Saunders E."/>
            <person name="Mavromatis K."/>
            <person name="Brettin T.S."/>
            <person name="Bentley S.D."/>
            <person name="Hothersall J."/>
            <person name="Stephens E."/>
            <person name="Thomas C.M."/>
            <person name="Parkhill J."/>
            <person name="Levy S.B."/>
            <person name="Rainey P.B."/>
            <person name="Thomson N.R."/>
        </authorList>
    </citation>
    <scope>NUCLEOTIDE SEQUENCE [LARGE SCALE GENOMIC DNA]</scope>
    <source>
        <strain>Pf0-1</strain>
    </source>
</reference>
<feature type="chain" id="PRO_0000267576" description="Type III pantothenate kinase">
    <location>
        <begin position="1"/>
        <end position="249"/>
    </location>
</feature>
<feature type="active site" description="Proton acceptor" evidence="1">
    <location>
        <position position="102"/>
    </location>
</feature>
<feature type="binding site" evidence="1">
    <location>
        <begin position="6"/>
        <end position="13"/>
    </location>
    <ligand>
        <name>ATP</name>
        <dbReference type="ChEBI" id="CHEBI:30616"/>
    </ligand>
</feature>
<feature type="binding site" evidence="1">
    <location>
        <position position="93"/>
    </location>
    <ligand>
        <name>substrate</name>
    </ligand>
</feature>
<feature type="binding site" evidence="1">
    <location>
        <begin position="100"/>
        <end position="103"/>
    </location>
    <ligand>
        <name>substrate</name>
    </ligand>
</feature>
<feature type="binding site" evidence="1">
    <location>
        <position position="122"/>
    </location>
    <ligand>
        <name>K(+)</name>
        <dbReference type="ChEBI" id="CHEBI:29103"/>
    </ligand>
</feature>
<feature type="binding site" evidence="1">
    <location>
        <position position="125"/>
    </location>
    <ligand>
        <name>ATP</name>
        <dbReference type="ChEBI" id="CHEBI:30616"/>
    </ligand>
</feature>
<feature type="binding site" evidence="1">
    <location>
        <position position="181"/>
    </location>
    <ligand>
        <name>substrate</name>
    </ligand>
</feature>
<proteinExistence type="inferred from homology"/>
<gene>
    <name evidence="1" type="primary">coaX</name>
    <name type="ordered locus">Pfl01_5095</name>
</gene>
<accession>Q3K5X2</accession>
<organism>
    <name type="scientific">Pseudomonas fluorescens (strain Pf0-1)</name>
    <dbReference type="NCBI Taxonomy" id="205922"/>
    <lineage>
        <taxon>Bacteria</taxon>
        <taxon>Pseudomonadati</taxon>
        <taxon>Pseudomonadota</taxon>
        <taxon>Gammaproteobacteria</taxon>
        <taxon>Pseudomonadales</taxon>
        <taxon>Pseudomonadaceae</taxon>
        <taxon>Pseudomonas</taxon>
    </lineage>
</organism>
<sequence>MILELDCGNSFIKWRVLRAEAGALIAEGVVDSDGALVDNLRSLEKVSLVKCRLVSVRTEDETNLLIGLLKQEFGISVVCAAPAREMSGVKNGYDDYERLGLDRWLAMLGGFHLAKGACLVLDFGTAVTADFISADGEHLGGFICPGMPLMRNQLRTHTRKIRYGDLAAERALTSQAPGRNTVEAVERGCSLMLRGFVLTQLEMARSYWGDDYRVFITGGDAELVSDVAPEARVVSDLVFVGLAMACPLS</sequence>
<protein>
    <recommendedName>
        <fullName evidence="1">Type III pantothenate kinase</fullName>
        <ecNumber evidence="1">2.7.1.33</ecNumber>
    </recommendedName>
    <alternativeName>
        <fullName evidence="1">PanK-III</fullName>
    </alternativeName>
    <alternativeName>
        <fullName evidence="1">Pantothenic acid kinase</fullName>
    </alternativeName>
</protein>
<keyword id="KW-0067">ATP-binding</keyword>
<keyword id="KW-0173">Coenzyme A biosynthesis</keyword>
<keyword id="KW-0963">Cytoplasm</keyword>
<keyword id="KW-0418">Kinase</keyword>
<keyword id="KW-0479">Metal-binding</keyword>
<keyword id="KW-0547">Nucleotide-binding</keyword>
<keyword id="KW-0630">Potassium</keyword>
<keyword id="KW-0808">Transferase</keyword>